<organism>
    <name type="scientific">Macrococcus caseolyticus (strain JCSC5402)</name>
    <name type="common">Macrococcoides caseolyticum</name>
    <dbReference type="NCBI Taxonomy" id="458233"/>
    <lineage>
        <taxon>Bacteria</taxon>
        <taxon>Bacillati</taxon>
        <taxon>Bacillota</taxon>
        <taxon>Bacilli</taxon>
        <taxon>Bacillales</taxon>
        <taxon>Staphylococcaceae</taxon>
        <taxon>Macrococcoides</taxon>
    </lineage>
</organism>
<reference key="1">
    <citation type="journal article" date="2009" name="J. Bacteriol.">
        <title>Complete genome sequence of Macrococcus caseolyticus strain JCSCS5402, reflecting the ancestral genome of the human-pathogenic staphylococci.</title>
        <authorList>
            <person name="Baba T."/>
            <person name="Kuwahara-Arai K."/>
            <person name="Uchiyama I."/>
            <person name="Takeuchi F."/>
            <person name="Ito T."/>
            <person name="Hiramatsu K."/>
        </authorList>
    </citation>
    <scope>NUCLEOTIDE SEQUENCE [LARGE SCALE GENOMIC DNA]</scope>
    <source>
        <strain>JCSC5402</strain>
    </source>
</reference>
<feature type="chain" id="PRO_1000122964" description="Bifunctional purine biosynthesis protein PurH">
    <location>
        <begin position="1"/>
        <end position="492"/>
    </location>
</feature>
<feature type="domain" description="MGS-like" evidence="2">
    <location>
        <begin position="1"/>
        <end position="144"/>
    </location>
</feature>
<protein>
    <recommendedName>
        <fullName evidence="1">Bifunctional purine biosynthesis protein PurH</fullName>
    </recommendedName>
    <domain>
        <recommendedName>
            <fullName evidence="1">Phosphoribosylaminoimidazolecarboxamide formyltransferase</fullName>
            <ecNumber evidence="1">2.1.2.3</ecNumber>
        </recommendedName>
        <alternativeName>
            <fullName evidence="1">AICAR transformylase</fullName>
        </alternativeName>
    </domain>
    <domain>
        <recommendedName>
            <fullName evidence="1">IMP cyclohydrolase</fullName>
            <ecNumber evidence="1">3.5.4.10</ecNumber>
        </recommendedName>
        <alternativeName>
            <fullName evidence="1">ATIC</fullName>
        </alternativeName>
        <alternativeName>
            <fullName evidence="1">IMP synthase</fullName>
        </alternativeName>
        <alternativeName>
            <fullName evidence="1">Inosinicase</fullName>
        </alternativeName>
    </domain>
</protein>
<accession>B9EAZ2</accession>
<proteinExistence type="inferred from homology"/>
<dbReference type="EC" id="2.1.2.3" evidence="1"/>
<dbReference type="EC" id="3.5.4.10" evidence="1"/>
<dbReference type="EMBL" id="AP009484">
    <property type="protein sequence ID" value="BAH17403.1"/>
    <property type="molecule type" value="Genomic_DNA"/>
</dbReference>
<dbReference type="RefSeq" id="WP_012656604.1">
    <property type="nucleotide sequence ID" value="NC_011999.1"/>
</dbReference>
<dbReference type="SMR" id="B9EAZ2"/>
<dbReference type="STRING" id="458233.MCCL_0696"/>
<dbReference type="KEGG" id="mcl:MCCL_0696"/>
<dbReference type="eggNOG" id="COG0138">
    <property type="taxonomic scope" value="Bacteria"/>
</dbReference>
<dbReference type="HOGENOM" id="CLU_016316_5_2_9"/>
<dbReference type="OrthoDB" id="9802065at2"/>
<dbReference type="UniPathway" id="UPA00074">
    <property type="reaction ID" value="UER00133"/>
</dbReference>
<dbReference type="UniPathway" id="UPA00074">
    <property type="reaction ID" value="UER00135"/>
</dbReference>
<dbReference type="Proteomes" id="UP000001383">
    <property type="component" value="Chromosome"/>
</dbReference>
<dbReference type="GO" id="GO:0005829">
    <property type="term" value="C:cytosol"/>
    <property type="evidence" value="ECO:0007669"/>
    <property type="project" value="TreeGrafter"/>
</dbReference>
<dbReference type="GO" id="GO:0003937">
    <property type="term" value="F:IMP cyclohydrolase activity"/>
    <property type="evidence" value="ECO:0007669"/>
    <property type="project" value="UniProtKB-UniRule"/>
</dbReference>
<dbReference type="GO" id="GO:0004643">
    <property type="term" value="F:phosphoribosylaminoimidazolecarboxamide formyltransferase activity"/>
    <property type="evidence" value="ECO:0007669"/>
    <property type="project" value="UniProtKB-UniRule"/>
</dbReference>
<dbReference type="GO" id="GO:0006189">
    <property type="term" value="P:'de novo' IMP biosynthetic process"/>
    <property type="evidence" value="ECO:0007669"/>
    <property type="project" value="UniProtKB-UniRule"/>
</dbReference>
<dbReference type="CDD" id="cd01421">
    <property type="entry name" value="IMPCH"/>
    <property type="match status" value="1"/>
</dbReference>
<dbReference type="FunFam" id="3.40.140.20:FF:000001">
    <property type="entry name" value="Bifunctional purine biosynthesis protein PurH"/>
    <property type="match status" value="1"/>
</dbReference>
<dbReference type="FunFam" id="3.40.140.20:FF:000002">
    <property type="entry name" value="Bifunctional purine biosynthesis protein PurH"/>
    <property type="match status" value="1"/>
</dbReference>
<dbReference type="FunFam" id="3.40.50.1380:FF:000001">
    <property type="entry name" value="Bifunctional purine biosynthesis protein PurH"/>
    <property type="match status" value="1"/>
</dbReference>
<dbReference type="Gene3D" id="3.40.140.20">
    <property type="match status" value="2"/>
</dbReference>
<dbReference type="Gene3D" id="3.40.50.1380">
    <property type="entry name" value="Methylglyoxal synthase-like domain"/>
    <property type="match status" value="1"/>
</dbReference>
<dbReference type="HAMAP" id="MF_00139">
    <property type="entry name" value="PurH"/>
    <property type="match status" value="1"/>
</dbReference>
<dbReference type="InterPro" id="IPR024051">
    <property type="entry name" value="AICAR_Tfase_dup_dom_sf"/>
</dbReference>
<dbReference type="InterPro" id="IPR016193">
    <property type="entry name" value="Cytidine_deaminase-like"/>
</dbReference>
<dbReference type="InterPro" id="IPR011607">
    <property type="entry name" value="MGS-like_dom"/>
</dbReference>
<dbReference type="InterPro" id="IPR036914">
    <property type="entry name" value="MGS-like_dom_sf"/>
</dbReference>
<dbReference type="InterPro" id="IPR002695">
    <property type="entry name" value="PurH-like"/>
</dbReference>
<dbReference type="NCBIfam" id="NF002049">
    <property type="entry name" value="PRK00881.1"/>
    <property type="match status" value="1"/>
</dbReference>
<dbReference type="NCBIfam" id="TIGR00355">
    <property type="entry name" value="purH"/>
    <property type="match status" value="1"/>
</dbReference>
<dbReference type="PANTHER" id="PTHR11692:SF0">
    <property type="entry name" value="BIFUNCTIONAL PURINE BIOSYNTHESIS PROTEIN ATIC"/>
    <property type="match status" value="1"/>
</dbReference>
<dbReference type="PANTHER" id="PTHR11692">
    <property type="entry name" value="BIFUNCTIONAL PURINE BIOSYNTHESIS PROTEIN PURH"/>
    <property type="match status" value="1"/>
</dbReference>
<dbReference type="Pfam" id="PF01808">
    <property type="entry name" value="AICARFT_IMPCHas"/>
    <property type="match status" value="1"/>
</dbReference>
<dbReference type="Pfam" id="PF02142">
    <property type="entry name" value="MGS"/>
    <property type="match status" value="1"/>
</dbReference>
<dbReference type="PIRSF" id="PIRSF000414">
    <property type="entry name" value="AICARFT_IMPCHas"/>
    <property type="match status" value="1"/>
</dbReference>
<dbReference type="SMART" id="SM00798">
    <property type="entry name" value="AICARFT_IMPCHas"/>
    <property type="match status" value="1"/>
</dbReference>
<dbReference type="SMART" id="SM00851">
    <property type="entry name" value="MGS"/>
    <property type="match status" value="1"/>
</dbReference>
<dbReference type="SUPFAM" id="SSF53927">
    <property type="entry name" value="Cytidine deaminase-like"/>
    <property type="match status" value="1"/>
</dbReference>
<dbReference type="SUPFAM" id="SSF52335">
    <property type="entry name" value="Methylglyoxal synthase-like"/>
    <property type="match status" value="1"/>
</dbReference>
<dbReference type="PROSITE" id="PS51855">
    <property type="entry name" value="MGS"/>
    <property type="match status" value="1"/>
</dbReference>
<keyword id="KW-0378">Hydrolase</keyword>
<keyword id="KW-0511">Multifunctional enzyme</keyword>
<keyword id="KW-0658">Purine biosynthesis</keyword>
<keyword id="KW-1185">Reference proteome</keyword>
<keyword id="KW-0808">Transferase</keyword>
<name>PUR9_MACCJ</name>
<sequence length="492" mass="54248">MRKALLSVSDKTGIIPFAERLTELDFELYSTGGTKKALEDNDIAVKSVSELTNFPEIMDGRVKTLHPNIHGGILADRNNPEHIKAMETHGIQPLDLVVVNLYPFEATVANPDVTEMDAIENIDIGGPTMLRSSAKNFRHVITVVDPADYDEVIEKLKTDTLDETFRKQLMIKVFTHTNKYDAAIVNFFSDNTSTLRYGENPHQKARFIKTDAKPNTLAGARVLHGKPLSFNNIKDADATLFLVKQFDMPAAVAVKHMNPCGVGTGEVISEAFQNAYDADSQSIFGGIVALNREVDKATAEKMHAIFLEVIIAPKFSDEALEILTAKKNIRLLEIDMDMDKDEEEFVSVSGGYLVQDKDLLNVTREDMRVVTNTEPTEAQWKAIELGWKVVKSVKSNAIVLANDKQTVGIGAGQMNRVGAAKIAIERAIEMNDNVVLASDGFFPMSDTVETAYAAGIKCIVQPGGSIKDQDSIDKANEYGIAMVMTDVRHFKH</sequence>
<gene>
    <name evidence="1" type="primary">purH</name>
    <name type="ordered locus">MCCL_0696</name>
</gene>
<comment type="catalytic activity">
    <reaction evidence="1">
        <text>(6R)-10-formyltetrahydrofolate + 5-amino-1-(5-phospho-beta-D-ribosyl)imidazole-4-carboxamide = 5-formamido-1-(5-phospho-D-ribosyl)imidazole-4-carboxamide + (6S)-5,6,7,8-tetrahydrofolate</text>
        <dbReference type="Rhea" id="RHEA:22192"/>
        <dbReference type="ChEBI" id="CHEBI:57453"/>
        <dbReference type="ChEBI" id="CHEBI:58467"/>
        <dbReference type="ChEBI" id="CHEBI:58475"/>
        <dbReference type="ChEBI" id="CHEBI:195366"/>
        <dbReference type="EC" id="2.1.2.3"/>
    </reaction>
</comment>
<comment type="catalytic activity">
    <reaction evidence="1">
        <text>IMP + H2O = 5-formamido-1-(5-phospho-D-ribosyl)imidazole-4-carboxamide</text>
        <dbReference type="Rhea" id="RHEA:18445"/>
        <dbReference type="ChEBI" id="CHEBI:15377"/>
        <dbReference type="ChEBI" id="CHEBI:58053"/>
        <dbReference type="ChEBI" id="CHEBI:58467"/>
        <dbReference type="EC" id="3.5.4.10"/>
    </reaction>
</comment>
<comment type="pathway">
    <text evidence="1">Purine metabolism; IMP biosynthesis via de novo pathway; 5-formamido-1-(5-phospho-D-ribosyl)imidazole-4-carboxamide from 5-amino-1-(5-phospho-D-ribosyl)imidazole-4-carboxamide (10-formyl THF route): step 1/1.</text>
</comment>
<comment type="pathway">
    <text evidence="1">Purine metabolism; IMP biosynthesis via de novo pathway; IMP from 5-formamido-1-(5-phospho-D-ribosyl)imidazole-4-carboxamide: step 1/1.</text>
</comment>
<comment type="domain">
    <text evidence="1">The IMP cyclohydrolase activity resides in the N-terminal region.</text>
</comment>
<comment type="similarity">
    <text evidence="1">Belongs to the PurH family.</text>
</comment>
<evidence type="ECO:0000255" key="1">
    <source>
        <dbReference type="HAMAP-Rule" id="MF_00139"/>
    </source>
</evidence>
<evidence type="ECO:0000255" key="2">
    <source>
        <dbReference type="PROSITE-ProRule" id="PRU01202"/>
    </source>
</evidence>